<organism>
    <name type="scientific">Lodderomyces elongisporus (strain ATCC 11503 / CBS 2605 / JCM 1781 / NBRC 1676 / NRRL YB-4239)</name>
    <name type="common">Yeast</name>
    <name type="synonym">Saccharomyces elongisporus</name>
    <dbReference type="NCBI Taxonomy" id="379508"/>
    <lineage>
        <taxon>Eukaryota</taxon>
        <taxon>Fungi</taxon>
        <taxon>Dikarya</taxon>
        <taxon>Ascomycota</taxon>
        <taxon>Saccharomycotina</taxon>
        <taxon>Pichiomycetes</taxon>
        <taxon>Debaryomycetaceae</taxon>
        <taxon>Candida/Lodderomyces clade</taxon>
        <taxon>Lodderomyces</taxon>
    </lineage>
</organism>
<reference key="1">
    <citation type="journal article" date="2009" name="Nature">
        <title>Evolution of pathogenicity and sexual reproduction in eight Candida genomes.</title>
        <authorList>
            <person name="Butler G."/>
            <person name="Rasmussen M.D."/>
            <person name="Lin M.F."/>
            <person name="Santos M.A.S."/>
            <person name="Sakthikumar S."/>
            <person name="Munro C.A."/>
            <person name="Rheinbay E."/>
            <person name="Grabherr M."/>
            <person name="Forche A."/>
            <person name="Reedy J.L."/>
            <person name="Agrafioti I."/>
            <person name="Arnaud M.B."/>
            <person name="Bates S."/>
            <person name="Brown A.J.P."/>
            <person name="Brunke S."/>
            <person name="Costanzo M.C."/>
            <person name="Fitzpatrick D.A."/>
            <person name="de Groot P.W.J."/>
            <person name="Harris D."/>
            <person name="Hoyer L.L."/>
            <person name="Hube B."/>
            <person name="Klis F.M."/>
            <person name="Kodira C."/>
            <person name="Lennard N."/>
            <person name="Logue M.E."/>
            <person name="Martin R."/>
            <person name="Neiman A.M."/>
            <person name="Nikolaou E."/>
            <person name="Quail M.A."/>
            <person name="Quinn J."/>
            <person name="Santos M.C."/>
            <person name="Schmitzberger F.F."/>
            <person name="Sherlock G."/>
            <person name="Shah P."/>
            <person name="Silverstein K.A.T."/>
            <person name="Skrzypek M.S."/>
            <person name="Soll D."/>
            <person name="Staggs R."/>
            <person name="Stansfield I."/>
            <person name="Stumpf M.P.H."/>
            <person name="Sudbery P.E."/>
            <person name="Srikantha T."/>
            <person name="Zeng Q."/>
            <person name="Berman J."/>
            <person name="Berriman M."/>
            <person name="Heitman J."/>
            <person name="Gow N.A.R."/>
            <person name="Lorenz M.C."/>
            <person name="Birren B.W."/>
            <person name="Kellis M."/>
            <person name="Cuomo C.A."/>
        </authorList>
    </citation>
    <scope>NUCLEOTIDE SEQUENCE [LARGE SCALE GENOMIC DNA]</scope>
    <source>
        <strain>ATCC 11503 / BCRC 21390 / CBS 2605 / JCM 1781 / NBRC 1676 / NRRL YB-4239</strain>
    </source>
</reference>
<proteinExistence type="inferred from homology"/>
<dbReference type="EMBL" id="CH981526">
    <property type="protein sequence ID" value="EDK44410.1"/>
    <property type="molecule type" value="Genomic_DNA"/>
</dbReference>
<dbReference type="RefSeq" id="XP_001526031.1">
    <property type="nucleotide sequence ID" value="XM_001525981.1"/>
</dbReference>
<dbReference type="SMR" id="A5DZ02"/>
<dbReference type="STRING" id="379508.A5DZ02"/>
<dbReference type="GeneID" id="5232957"/>
<dbReference type="KEGG" id="lel:PVL30_003419"/>
<dbReference type="VEuPathDB" id="FungiDB:LELG_02589"/>
<dbReference type="eggNOG" id="ENOG502S7IA">
    <property type="taxonomic scope" value="Eukaryota"/>
</dbReference>
<dbReference type="HOGENOM" id="CLU_836958_0_0_1"/>
<dbReference type="InParanoid" id="A5DZ02"/>
<dbReference type="OrthoDB" id="5578174at2759"/>
<dbReference type="Proteomes" id="UP000001996">
    <property type="component" value="Unassembled WGS sequence"/>
</dbReference>
<dbReference type="GO" id="GO:0005739">
    <property type="term" value="C:mitochondrion"/>
    <property type="evidence" value="ECO:0007669"/>
    <property type="project" value="UniProtKB-SubCell"/>
</dbReference>
<dbReference type="GO" id="GO:0005634">
    <property type="term" value="C:nucleus"/>
    <property type="evidence" value="ECO:0007669"/>
    <property type="project" value="TreeGrafter"/>
</dbReference>
<dbReference type="InterPro" id="IPR010487">
    <property type="entry name" value="NGRN/Rrg9"/>
</dbReference>
<dbReference type="PANTHER" id="PTHR13475">
    <property type="entry name" value="NEUGRIN"/>
    <property type="match status" value="1"/>
</dbReference>
<dbReference type="PANTHER" id="PTHR13475:SF3">
    <property type="entry name" value="NEUGRIN"/>
    <property type="match status" value="1"/>
</dbReference>
<dbReference type="Pfam" id="PF06413">
    <property type="entry name" value="Neugrin"/>
    <property type="match status" value="1"/>
</dbReference>
<keyword id="KW-0496">Mitochondrion</keyword>
<keyword id="KW-1185">Reference proteome</keyword>
<keyword id="KW-0809">Transit peptide</keyword>
<evidence type="ECO:0000250" key="1"/>
<evidence type="ECO:0000255" key="2"/>
<evidence type="ECO:0000256" key="3">
    <source>
        <dbReference type="SAM" id="MobiDB-lite"/>
    </source>
</evidence>
<evidence type="ECO:0000305" key="4"/>
<gene>
    <name type="primary">RRG9</name>
    <name type="ORF">LELG_02589</name>
</gene>
<protein>
    <recommendedName>
        <fullName>Required for respiratory growth protein 9, mitochondrial</fullName>
    </recommendedName>
</protein>
<feature type="transit peptide" description="Mitochondrion" evidence="2">
    <location>
        <begin position="1"/>
        <end status="unknown"/>
    </location>
</feature>
<feature type="chain" id="PRO_0000407950" description="Required for respiratory growth protein 9, mitochondrial">
    <location>
        <begin status="unknown"/>
        <end position="332"/>
    </location>
</feature>
<feature type="region of interest" description="Disordered" evidence="3">
    <location>
        <begin position="37"/>
        <end position="70"/>
    </location>
</feature>
<feature type="region of interest" description="Disordered" evidence="3">
    <location>
        <begin position="126"/>
        <end position="166"/>
    </location>
</feature>
<feature type="region of interest" description="Disordered" evidence="3">
    <location>
        <begin position="285"/>
        <end position="316"/>
    </location>
</feature>
<feature type="compositionally biased region" description="Low complexity" evidence="3">
    <location>
        <begin position="37"/>
        <end position="55"/>
    </location>
</feature>
<feature type="compositionally biased region" description="Low complexity" evidence="3">
    <location>
        <begin position="130"/>
        <end position="166"/>
    </location>
</feature>
<feature type="compositionally biased region" description="Low complexity" evidence="3">
    <location>
        <begin position="293"/>
        <end position="306"/>
    </location>
</feature>
<name>RRG9_LODEL</name>
<comment type="function">
    <text evidence="1">Required for respiratory activity and maintenance and expression of the mitochondrial genome.</text>
</comment>
<comment type="subcellular location">
    <subcellularLocation>
        <location evidence="1">Mitochondrion</location>
    </subcellularLocation>
</comment>
<comment type="similarity">
    <text evidence="4">Belongs to the RRG9 family.</text>
</comment>
<sequence length="332" mass="36961">MLSQCFRSSLAKHCFVAKNQALHGKFVNSIMCLSSSSSNSGSSNSNSNSGSSNSNIRYNDNYRSNDDGTNFEELQLPSALKSETESLNGKGKNKLSKRPQTLLEALIESHGTLPEEVDEPKITRNVASESATSATSATSATSATSATSATSATSATSATSATSATSTTTIITTTATVPVENNVSTPYWVKRELTMKAKHSQWNPKKKLSREDMLKLRELKENFPHYKTVELAELFRVSPEAVRRILKSNWVPNDIDEDRIIARREKQKQKRQQEIQLKKLEFISNRGKKNVSSRPQQRQQQQPKQQQRQRSKVGYKNGFAFNEKYGGLGNKF</sequence>
<accession>A5DZ02</accession>